<name>LRIT3_MOUSE</name>
<proteinExistence type="evidence at protein level"/>
<protein>
    <recommendedName>
        <fullName evidence="9">Leucine-rich repeat, immunoglobulin-like domain and transmembrane domain-containing protein 3</fullName>
    </recommendedName>
</protein>
<evidence type="ECO:0000250" key="1">
    <source>
        <dbReference type="UniProtKB" id="Q3SXY7"/>
    </source>
</evidence>
<evidence type="ECO:0000255" key="2"/>
<evidence type="ECO:0000255" key="3">
    <source>
        <dbReference type="PROSITE-ProRule" id="PRU00114"/>
    </source>
</evidence>
<evidence type="ECO:0000256" key="4">
    <source>
        <dbReference type="SAM" id="MobiDB-lite"/>
    </source>
</evidence>
<evidence type="ECO:0000269" key="5">
    <source>
    </source>
</evidence>
<evidence type="ECO:0000269" key="6">
    <source>
    </source>
</evidence>
<evidence type="ECO:0000269" key="7">
    <source>
    </source>
</evidence>
<evidence type="ECO:0000269" key="8">
    <source>
    </source>
</evidence>
<evidence type="ECO:0000305" key="9"/>
<evidence type="ECO:0000312" key="10">
    <source>
        <dbReference type="EMBL" id="AHI87499.1"/>
    </source>
</evidence>
<evidence type="ECO:0000312" key="11">
    <source>
        <dbReference type="MGI" id="MGI:2685267"/>
    </source>
</evidence>
<evidence type="ECO:0000312" key="12">
    <source>
        <dbReference type="Proteomes" id="UP000000589"/>
    </source>
</evidence>
<dbReference type="EMBL" id="KF954709">
    <property type="protein sequence ID" value="AHI87499.1"/>
    <property type="molecule type" value="mRNA"/>
</dbReference>
<dbReference type="EMBL" id="AC111097">
    <property type="status" value="NOT_ANNOTATED_CDS"/>
    <property type="molecule type" value="Genomic_DNA"/>
</dbReference>
<dbReference type="CCDS" id="CCDS57256.2"/>
<dbReference type="RefSeq" id="NP_001274153.1">
    <property type="nucleotide sequence ID" value="NM_001287224.2"/>
</dbReference>
<dbReference type="SMR" id="W8DXL4"/>
<dbReference type="FunCoup" id="W8DXL4">
    <property type="interactions" value="1"/>
</dbReference>
<dbReference type="STRING" id="10090.ENSMUSP00000140184"/>
<dbReference type="GlyCosmos" id="W8DXL4">
    <property type="glycosylation" value="4 sites, No reported glycans"/>
</dbReference>
<dbReference type="GlyGen" id="W8DXL4">
    <property type="glycosylation" value="6 sites"/>
</dbReference>
<dbReference type="PhosphoSitePlus" id="W8DXL4"/>
<dbReference type="PaxDb" id="10090-ENSMUSP00000140184"/>
<dbReference type="ProteomicsDB" id="287273"/>
<dbReference type="Antibodypedia" id="2679">
    <property type="antibodies" value="76 antibodies from 18 providers"/>
</dbReference>
<dbReference type="Ensembl" id="ENSMUST00000185462.7">
    <property type="protein sequence ID" value="ENSMUSP00000140184.2"/>
    <property type="gene ID" value="ENSMUSG00000093865.8"/>
</dbReference>
<dbReference type="GeneID" id="242235"/>
<dbReference type="KEGG" id="mmu:242235"/>
<dbReference type="UCSC" id="uc033hzp.1">
    <property type="organism name" value="mouse"/>
</dbReference>
<dbReference type="AGR" id="MGI:2685267"/>
<dbReference type="CTD" id="345193"/>
<dbReference type="MGI" id="MGI:2685267">
    <property type="gene designation" value="Lrit3"/>
</dbReference>
<dbReference type="VEuPathDB" id="HostDB:ENSMUSG00000093865"/>
<dbReference type="eggNOG" id="KOG0619">
    <property type="taxonomic scope" value="Eukaryota"/>
</dbReference>
<dbReference type="eggNOG" id="KOG3510">
    <property type="taxonomic scope" value="Eukaryota"/>
</dbReference>
<dbReference type="GeneTree" id="ENSGT00940000156627"/>
<dbReference type="InParanoid" id="W8DXL4"/>
<dbReference type="OMA" id="DMNEVPM"/>
<dbReference type="OrthoDB" id="9229163at2759"/>
<dbReference type="PhylomeDB" id="W8DXL4"/>
<dbReference type="BioGRID-ORCS" id="242235">
    <property type="hits" value="2 hits in 76 CRISPR screens"/>
</dbReference>
<dbReference type="PRO" id="PR:W8DXL4"/>
<dbReference type="Proteomes" id="UP000000589">
    <property type="component" value="Chromosome 3"/>
</dbReference>
<dbReference type="RNAct" id="W8DXL4">
    <property type="molecule type" value="protein"/>
</dbReference>
<dbReference type="Bgee" id="ENSMUSG00000093865">
    <property type="expression patterns" value="Expressed in retinal neural layer and 16 other cell types or tissues"/>
</dbReference>
<dbReference type="ExpressionAtlas" id="W8DXL4">
    <property type="expression patterns" value="baseline and differential"/>
</dbReference>
<dbReference type="GO" id="GO:0051286">
    <property type="term" value="C:cell tip"/>
    <property type="evidence" value="ECO:0000314"/>
    <property type="project" value="MGI"/>
</dbReference>
<dbReference type="GO" id="GO:0030425">
    <property type="term" value="C:dendrite"/>
    <property type="evidence" value="ECO:0000314"/>
    <property type="project" value="MGI"/>
</dbReference>
<dbReference type="GO" id="GO:0005789">
    <property type="term" value="C:endoplasmic reticulum membrane"/>
    <property type="evidence" value="ECO:0007669"/>
    <property type="project" value="UniProtKB-SubCell"/>
</dbReference>
<dbReference type="GO" id="GO:0043204">
    <property type="term" value="C:perikaryon"/>
    <property type="evidence" value="ECO:0007669"/>
    <property type="project" value="UniProtKB-SubCell"/>
</dbReference>
<dbReference type="GO" id="GO:0045202">
    <property type="term" value="C:synapse"/>
    <property type="evidence" value="ECO:0007669"/>
    <property type="project" value="GOC"/>
</dbReference>
<dbReference type="GO" id="GO:0010467">
    <property type="term" value="P:gene expression"/>
    <property type="evidence" value="ECO:0000315"/>
    <property type="project" value="MGI"/>
</dbReference>
<dbReference type="GO" id="GO:0008104">
    <property type="term" value="P:protein localization"/>
    <property type="evidence" value="ECO:0000315"/>
    <property type="project" value="MGI"/>
</dbReference>
<dbReference type="GO" id="GO:0040036">
    <property type="term" value="P:regulation of fibroblast growth factor receptor signaling pathway"/>
    <property type="evidence" value="ECO:0007669"/>
    <property type="project" value="Ensembl"/>
</dbReference>
<dbReference type="GO" id="GO:0009416">
    <property type="term" value="P:response to light stimulus"/>
    <property type="evidence" value="ECO:0000315"/>
    <property type="project" value="MGI"/>
</dbReference>
<dbReference type="GO" id="GO:0060386">
    <property type="term" value="P:synapse assembly involved in innervation"/>
    <property type="evidence" value="ECO:0000315"/>
    <property type="project" value="MGI"/>
</dbReference>
<dbReference type="GO" id="GO:0099536">
    <property type="term" value="P:synaptic signaling"/>
    <property type="evidence" value="ECO:0000315"/>
    <property type="project" value="MGI"/>
</dbReference>
<dbReference type="GO" id="GO:0007601">
    <property type="term" value="P:visual perception"/>
    <property type="evidence" value="ECO:0000315"/>
    <property type="project" value="MGI"/>
</dbReference>
<dbReference type="CDD" id="cd00063">
    <property type="entry name" value="FN3"/>
    <property type="match status" value="1"/>
</dbReference>
<dbReference type="FunFam" id="3.80.10.10:FF:000058">
    <property type="entry name" value="immunoglobulin superfamily containing leucine-rich repeat protein 2"/>
    <property type="match status" value="1"/>
</dbReference>
<dbReference type="FunFam" id="2.60.40.10:FF:000744">
    <property type="entry name" value="Leucine rich repeat, Ig-like and transmembrane domains 1"/>
    <property type="match status" value="1"/>
</dbReference>
<dbReference type="FunFam" id="2.60.40.10:FF:001368">
    <property type="entry name" value="Leucine rich repeat, Ig-like and transmembrane domains 3"/>
    <property type="match status" value="1"/>
</dbReference>
<dbReference type="Gene3D" id="2.60.40.10">
    <property type="entry name" value="Immunoglobulins"/>
    <property type="match status" value="2"/>
</dbReference>
<dbReference type="Gene3D" id="3.80.10.10">
    <property type="entry name" value="Ribonuclease Inhibitor"/>
    <property type="match status" value="1"/>
</dbReference>
<dbReference type="InterPro" id="IPR003961">
    <property type="entry name" value="FN3_dom"/>
</dbReference>
<dbReference type="InterPro" id="IPR036116">
    <property type="entry name" value="FN3_sf"/>
</dbReference>
<dbReference type="InterPro" id="IPR007110">
    <property type="entry name" value="Ig-like_dom"/>
</dbReference>
<dbReference type="InterPro" id="IPR036179">
    <property type="entry name" value="Ig-like_dom_sf"/>
</dbReference>
<dbReference type="InterPro" id="IPR013783">
    <property type="entry name" value="Ig-like_fold"/>
</dbReference>
<dbReference type="InterPro" id="IPR003599">
    <property type="entry name" value="Ig_sub"/>
</dbReference>
<dbReference type="InterPro" id="IPR003598">
    <property type="entry name" value="Ig_sub2"/>
</dbReference>
<dbReference type="InterPro" id="IPR001611">
    <property type="entry name" value="Leu-rich_rpt"/>
</dbReference>
<dbReference type="InterPro" id="IPR003591">
    <property type="entry name" value="Leu-rich_rpt_typical-subtyp"/>
</dbReference>
<dbReference type="InterPro" id="IPR050467">
    <property type="entry name" value="LRFN"/>
</dbReference>
<dbReference type="InterPro" id="IPR032675">
    <property type="entry name" value="LRR_dom_sf"/>
</dbReference>
<dbReference type="PANTHER" id="PTHR45842:SF8">
    <property type="entry name" value="LEUCINE-RICH REPEAT, IMMUNOGLOBULIN-LIKE DOMAIN AND TRANSMEMBRANE DOMAIN-CONTAINING PROTEIN 3"/>
    <property type="match status" value="1"/>
</dbReference>
<dbReference type="PANTHER" id="PTHR45842">
    <property type="entry name" value="SYNAPTIC ADHESION-LIKE MOLECULE SALM"/>
    <property type="match status" value="1"/>
</dbReference>
<dbReference type="Pfam" id="PF13927">
    <property type="entry name" value="Ig_3"/>
    <property type="match status" value="1"/>
</dbReference>
<dbReference type="Pfam" id="PF13855">
    <property type="entry name" value="LRR_8"/>
    <property type="match status" value="2"/>
</dbReference>
<dbReference type="SMART" id="SM00409">
    <property type="entry name" value="IG"/>
    <property type="match status" value="1"/>
</dbReference>
<dbReference type="SMART" id="SM00408">
    <property type="entry name" value="IGc2"/>
    <property type="match status" value="1"/>
</dbReference>
<dbReference type="SMART" id="SM00369">
    <property type="entry name" value="LRR_TYP"/>
    <property type="match status" value="4"/>
</dbReference>
<dbReference type="SUPFAM" id="SSF49265">
    <property type="entry name" value="Fibronectin type III"/>
    <property type="match status" value="1"/>
</dbReference>
<dbReference type="SUPFAM" id="SSF48726">
    <property type="entry name" value="Immunoglobulin"/>
    <property type="match status" value="1"/>
</dbReference>
<dbReference type="SUPFAM" id="SSF52058">
    <property type="entry name" value="L domain-like"/>
    <property type="match status" value="1"/>
</dbReference>
<dbReference type="PROSITE" id="PS50835">
    <property type="entry name" value="IG_LIKE"/>
    <property type="match status" value="1"/>
</dbReference>
<dbReference type="PROSITE" id="PS51450">
    <property type="entry name" value="LRR"/>
    <property type="match status" value="4"/>
</dbReference>
<accession>W8DXL4</accession>
<keyword id="KW-0966">Cell projection</keyword>
<keyword id="KW-1015">Disulfide bond</keyword>
<keyword id="KW-0256">Endoplasmic reticulum</keyword>
<keyword id="KW-0325">Glycoprotein</keyword>
<keyword id="KW-0393">Immunoglobulin domain</keyword>
<keyword id="KW-0433">Leucine-rich repeat</keyword>
<keyword id="KW-0472">Membrane</keyword>
<keyword id="KW-1185">Reference proteome</keyword>
<keyword id="KW-0677">Repeat</keyword>
<keyword id="KW-0716">Sensory transduction</keyword>
<keyword id="KW-0732">Signal</keyword>
<keyword id="KW-0812">Transmembrane</keyword>
<keyword id="KW-1133">Transmembrane helix</keyword>
<keyword id="KW-0844">Vision</keyword>
<reference key="1">
    <citation type="journal article" date="2014" name="PLoS ONE">
        <title>Lrit3 deficient mouse (nob6): a novel model of complete congenital stationary night blindness (cCSNB).</title>
        <authorList>
            <person name="Neuille M."/>
            <person name="El Shamieh S."/>
            <person name="Orhan E."/>
            <person name="Michiels C."/>
            <person name="Antonio A."/>
            <person name="Lancelot M.E."/>
            <person name="Condroyer C."/>
            <person name="Bujakowska K."/>
            <person name="Poch O."/>
            <person name="Sahel J.A."/>
            <person name="Audo I."/>
            <person name="Zeitz C."/>
        </authorList>
    </citation>
    <scope>NUCLEOTIDE SEQUENCE [MRNA]</scope>
    <scope>DISRUPTION PHENOTYPE</scope>
    <source>
        <strain evidence="10">C57BL/6JRj</strain>
    </source>
</reference>
<reference key="2">
    <citation type="journal article" date="2009" name="PLoS Biol.">
        <title>Lineage-specific biology revealed by a finished genome assembly of the mouse.</title>
        <authorList>
            <person name="Church D.M."/>
            <person name="Goodstadt L."/>
            <person name="Hillier L.W."/>
            <person name="Zody M.C."/>
            <person name="Goldstein S."/>
            <person name="She X."/>
            <person name="Bult C.J."/>
            <person name="Agarwala R."/>
            <person name="Cherry J.L."/>
            <person name="DiCuccio M."/>
            <person name="Hlavina W."/>
            <person name="Kapustin Y."/>
            <person name="Meric P."/>
            <person name="Maglott D."/>
            <person name="Birtle Z."/>
            <person name="Marques A.C."/>
            <person name="Graves T."/>
            <person name="Zhou S."/>
            <person name="Teague B."/>
            <person name="Potamousis K."/>
            <person name="Churas C."/>
            <person name="Place M."/>
            <person name="Herschleb J."/>
            <person name="Runnheim R."/>
            <person name="Forrest D."/>
            <person name="Amos-Landgraf J."/>
            <person name="Schwartz D.C."/>
            <person name="Cheng Z."/>
            <person name="Lindblad-Toh K."/>
            <person name="Eichler E.E."/>
            <person name="Ponting C.P."/>
        </authorList>
    </citation>
    <scope>NUCLEOTIDE SEQUENCE [LARGE SCALE GENOMIC DNA]</scope>
    <source>
        <strain evidence="12">C57BL/6J</strain>
    </source>
</reference>
<reference key="3">
    <citation type="journal article" date="2015" name="Eur. J. Neurosci.">
        <title>LRIT3 is essential to localize TRPM1 to the dendritic tips of depolarizing bipolar cells and may play a role in cone synapse formation.</title>
        <authorList>
            <person name="Neuille M."/>
            <person name="Morgans C.W."/>
            <person name="Cao Y."/>
            <person name="Orhan E."/>
            <person name="Michiels C."/>
            <person name="Sahel J.A."/>
            <person name="Audo I."/>
            <person name="Duvoisin R.M."/>
            <person name="Martemyanov K.A."/>
            <person name="Zeitz C."/>
        </authorList>
    </citation>
    <scope>FUNCTION</scope>
    <scope>SUBCELLULAR LOCATION</scope>
    <scope>TISSUE SPECIFICITY</scope>
</reference>
<reference key="4">
    <citation type="journal article" date="2016" name="Adv. Exp. Med. Biol.">
        <title>A Chemical Mutagenesis Screen Identifies Mouse Models with ERG Defects.</title>
        <authorList>
            <person name="Charette J.R."/>
            <person name="Samuels I.S."/>
            <person name="Yu M."/>
            <person name="Stone L."/>
            <person name="Hicks W."/>
            <person name="Shi L.Y."/>
            <person name="Krebs M.P."/>
            <person name="Naggert J.K."/>
            <person name="Nishina P.M."/>
            <person name="Peachey N.S."/>
        </authorList>
    </citation>
    <scope>FUNCTION</scope>
    <scope>MUTAGENESIS OF LEU-134</scope>
</reference>
<reference key="5">
    <citation type="journal article" date="2017" name="Invest. Ophthalmol. Vis. Sci.">
        <title>LRIT3 Differentially Affects Connectivity and Synaptic Transmission of Cones to ON- and OFF-Bipolar Cells.</title>
        <authorList>
            <person name="Neuille M."/>
            <person name="Cao Y."/>
            <person name="Caplette R."/>
            <person name="Guerrero-Given D."/>
            <person name="Thomas C."/>
            <person name="Kamasawa N."/>
            <person name="Sahel J.A."/>
            <person name="Hamel C.P."/>
            <person name="Audo I."/>
            <person name="Picaud S."/>
            <person name="Martemyanov K.A."/>
            <person name="Zeitz C."/>
        </authorList>
    </citation>
    <scope>FUNCTION</scope>
    <scope>DISRUPTION PHENOTYPE</scope>
</reference>
<gene>
    <name evidence="11" type="primary">Lrit3</name>
</gene>
<organism evidence="12">
    <name type="scientific">Mus musculus</name>
    <name type="common">Mouse</name>
    <dbReference type="NCBI Taxonomy" id="10090"/>
    <lineage>
        <taxon>Eukaryota</taxon>
        <taxon>Metazoa</taxon>
        <taxon>Chordata</taxon>
        <taxon>Craniata</taxon>
        <taxon>Vertebrata</taxon>
        <taxon>Euteleostomi</taxon>
        <taxon>Mammalia</taxon>
        <taxon>Eutheria</taxon>
        <taxon>Euarchontoglires</taxon>
        <taxon>Glires</taxon>
        <taxon>Rodentia</taxon>
        <taxon>Myomorpha</taxon>
        <taxon>Muroidea</taxon>
        <taxon>Muridae</taxon>
        <taxon>Murinae</taxon>
        <taxon>Mus</taxon>
        <taxon>Mus</taxon>
    </lineage>
</organism>
<sequence length="681" mass="74827">MWLSACLCLVLSFLGGVNGTCPSQCSCEYHGRHDGSGSRLVLCNDLDMNEVPANFPVDTSKLRIEKTVVRRLPAEAFYYLVELQYLWLAYNSVASIETSSFYNLRQLHELRLDGNSLTAFPWVSLLDMPHLRTLDLHNNRIASVPNEAVRYLRNLTCLDLSSNRLTTLPPDFLDSWSHLAVTPSRSPDFPPRRIILGLQDNPWFCDCHISKVIELSKVTDHAVVLLDPLMVCSEPERFQGILFQRVELEKCLKPSVMMSATKITSALGSNVLLRCDAKGHPTPQLTWTRSDGSTVNYTVIQESPGEGIRWSIISLTSISHKDAGDYRCKAKNLAGISEAVVTVTVVGGVTTTLSPDSSERSPGEPPEQHPQPGLGGSTPPSKSWLSPGLTSAPSYPTPSAALYTSTWSPPPSSLPPIFSAASATTSVQTSISGRTARTSHQPPLLHPGGKSNAKIEKNGRKFPPLSASKKEELALLDQAAPMETNVTIKDLRVARETGVSVTLMWNSSSSTQESSVTVLYSKYGEKDLLLVNADDYGKNQATINGLEPGSQYVACVCPKGVGPREDLCITFSTNRVEGRGSQWSLLLVVTSTACVIVVPLICFLLYKVCKLQCTSDPFWEEDLSKETYIQFETLSPRSQSIGELWTRRHRDDGERLLLCSQSSVDSQMNLKSDGCRTEYYG</sequence>
<feature type="signal peptide" evidence="2">
    <location>
        <begin position="1"/>
        <end position="19"/>
    </location>
</feature>
<feature type="chain" id="PRO_5007218087" description="Leucine-rich repeat, immunoglobulin-like domain and transmembrane domain-containing protein 3" evidence="2">
    <location>
        <begin position="20"/>
        <end position="681"/>
    </location>
</feature>
<feature type="topological domain" description="Lumenal" evidence="9">
    <location>
        <begin position="20"/>
        <end position="584"/>
    </location>
</feature>
<feature type="transmembrane region" description="Helical" evidence="2">
    <location>
        <begin position="585"/>
        <end position="605"/>
    </location>
</feature>
<feature type="topological domain" description="Cytoplasmic" evidence="9">
    <location>
        <begin position="606"/>
        <end position="681"/>
    </location>
</feature>
<feature type="repeat" description="LRR 1" evidence="2">
    <location>
        <begin position="56"/>
        <end position="79"/>
    </location>
</feature>
<feature type="repeat" description="LRR 2" evidence="2">
    <location>
        <begin position="80"/>
        <end position="103"/>
    </location>
</feature>
<feature type="repeat" description="LRR 3" evidence="2">
    <location>
        <begin position="104"/>
        <end position="128"/>
    </location>
</feature>
<feature type="repeat" description="LRR 4" evidence="2">
    <location>
        <begin position="129"/>
        <end position="151"/>
    </location>
</feature>
<feature type="repeat" description="LRR 5" evidence="2">
    <location>
        <begin position="152"/>
        <end position="175"/>
    </location>
</feature>
<feature type="domain" description="Ig-like" evidence="3">
    <location>
        <begin position="254"/>
        <end position="344"/>
    </location>
</feature>
<feature type="region of interest" description="Disordered" evidence="4">
    <location>
        <begin position="350"/>
        <end position="391"/>
    </location>
</feature>
<feature type="region of interest" description="Disordered" evidence="4">
    <location>
        <begin position="425"/>
        <end position="464"/>
    </location>
</feature>
<feature type="compositionally biased region" description="Polar residues" evidence="4">
    <location>
        <begin position="378"/>
        <end position="391"/>
    </location>
</feature>
<feature type="glycosylation site" description="N-linked (GlcNAc...) asparagine" evidence="2">
    <location>
        <position position="18"/>
    </location>
</feature>
<feature type="glycosylation site" description="N-linked (GlcNAc...) asparagine" evidence="2">
    <location>
        <position position="296"/>
    </location>
</feature>
<feature type="glycosylation site" description="N-linked (GlcNAc...) asparagine" evidence="2">
    <location>
        <position position="485"/>
    </location>
</feature>
<feature type="glycosylation site" description="N-linked (GlcNAc...) asparagine" evidence="2">
    <location>
        <position position="506"/>
    </location>
</feature>
<feature type="disulfide bond" evidence="3">
    <location>
        <begin position="275"/>
        <end position="328"/>
    </location>
</feature>
<feature type="mutagenesis site" description="Defects in depolarization of photoreceptors in the inner retina, and defects in cone photoreceptor light response. Gross morphology is normal." evidence="7">
    <original>L</original>
    <variation>P</variation>
    <location>
        <position position="134"/>
    </location>
</feature>
<comment type="function">
    <text evidence="1 6 7 8">Plays a role in the synapse formation and synaptic transmission between cone photoreceptor cells and retinal bipolar cells (PubMed:25997951, PubMed:26427409, PubMed:28334377). Required for normal transmission of a light-evoked stimulus from the cone photoreceptor cells to the ON-bipolar cells and ON-ganglion cells in the inner retina (PubMed:26427409, PubMed:28334377). Required in retinal ON-bipolar cells for normal localization of the cation channel TRPM1 at dendrite tips (PubMed:25997951). Seems to play a specific role in synaptic contacts made by ON-bipolar cells with cone photoreceptor pedicles (PubMed:28334377). May also have a role in cone synapse formation (PubMed:25997951, PubMed:28334377). Might facilitate FGFR1 exit from the endoplasmic reticulum to the Golgi (By similarity). Could be a regulator of the FGFRs (By similarity).</text>
</comment>
<comment type="subcellular location">
    <subcellularLocation>
        <location evidence="6">Cell projection</location>
        <location evidence="6">Dendrite</location>
    </subcellularLocation>
    <subcellularLocation>
        <location evidence="6">Perikaryon</location>
    </subcellularLocation>
    <subcellularLocation>
        <location evidence="1">Endoplasmic reticulum membrane</location>
        <topology evidence="9">Single-pass type I membrane protein</topology>
    </subcellularLocation>
    <text evidence="6">Punctate expression at dendrite tips.</text>
</comment>
<comment type="tissue specificity">
    <text evidence="6">Detected in the outer plexiform layer (OPL) of the retina, where it localizes to rod and cone ON-bipolar cells (at protein level). Also detected in bipolar cell bodies in the inner retinal layer (INL) (at protein level).</text>
</comment>
<comment type="disruption phenotype">
    <text evidence="5 8">Viable. Retinal anatomy is grossly normal, although thickness of the INL is reduced. In addition thickness of the innermost region consisting of the inner plexiform layer, ganglion cell layer and optic nerve fiber layer (IPL, GCL, NFL), is reduced. Optomotor responses in dim conditions are impaired. Electroretinography shows completely absent b-wave response under dim conditions, and milder abnormalities under bright conditions (PubMed:24598786). Abolishes ON-responses and delays OFF-responses in retinal ganglion cells (PubMed:28334377). Rod photoreceptors show normal morphology (PubMed:28334377). Cone photoreceptor synapses show morphological abnormalities including a decrease in the number of triad processes in cone pedicles in favor of diad processes, the number of flat contacts at the base of pedicle synapses are increased, deep invaginating contacts made by cone ON-bipolar cells are lost, and vacuole-like structures are present at cone synaptic terminals (PubMed:28334377).</text>
</comment>